<dbReference type="EC" id="2.1.2.9" evidence="1"/>
<dbReference type="EMBL" id="CP000382">
    <property type="protein sequence ID" value="ABK61126.1"/>
    <property type="molecule type" value="Genomic_DNA"/>
</dbReference>
<dbReference type="RefSeq" id="WP_011722314.1">
    <property type="nucleotide sequence ID" value="NC_008593.1"/>
</dbReference>
<dbReference type="SMR" id="A0Q115"/>
<dbReference type="STRING" id="386415.NT01CX_2244"/>
<dbReference type="KEGG" id="cno:NT01CX_2244"/>
<dbReference type="eggNOG" id="COG0223">
    <property type="taxonomic scope" value="Bacteria"/>
</dbReference>
<dbReference type="HOGENOM" id="CLU_033347_1_1_9"/>
<dbReference type="Proteomes" id="UP000008220">
    <property type="component" value="Chromosome"/>
</dbReference>
<dbReference type="GO" id="GO:0005829">
    <property type="term" value="C:cytosol"/>
    <property type="evidence" value="ECO:0007669"/>
    <property type="project" value="TreeGrafter"/>
</dbReference>
<dbReference type="GO" id="GO:0004479">
    <property type="term" value="F:methionyl-tRNA formyltransferase activity"/>
    <property type="evidence" value="ECO:0007669"/>
    <property type="project" value="UniProtKB-UniRule"/>
</dbReference>
<dbReference type="CDD" id="cd08646">
    <property type="entry name" value="FMT_core_Met-tRNA-FMT_N"/>
    <property type="match status" value="1"/>
</dbReference>
<dbReference type="CDD" id="cd08704">
    <property type="entry name" value="Met_tRNA_FMT_C"/>
    <property type="match status" value="1"/>
</dbReference>
<dbReference type="FunFam" id="3.40.50.170:FF:000004">
    <property type="entry name" value="Methionyl-tRNA formyltransferase"/>
    <property type="match status" value="1"/>
</dbReference>
<dbReference type="Gene3D" id="3.10.25.10">
    <property type="entry name" value="Formyl transferase, C-terminal domain"/>
    <property type="match status" value="1"/>
</dbReference>
<dbReference type="Gene3D" id="3.40.50.170">
    <property type="entry name" value="Formyl transferase, N-terminal domain"/>
    <property type="match status" value="1"/>
</dbReference>
<dbReference type="HAMAP" id="MF_00182">
    <property type="entry name" value="Formyl_trans"/>
    <property type="match status" value="1"/>
</dbReference>
<dbReference type="InterPro" id="IPR005794">
    <property type="entry name" value="Fmt"/>
</dbReference>
<dbReference type="InterPro" id="IPR005793">
    <property type="entry name" value="Formyl_trans_C"/>
</dbReference>
<dbReference type="InterPro" id="IPR037022">
    <property type="entry name" value="Formyl_trans_C_sf"/>
</dbReference>
<dbReference type="InterPro" id="IPR002376">
    <property type="entry name" value="Formyl_transf_N"/>
</dbReference>
<dbReference type="InterPro" id="IPR036477">
    <property type="entry name" value="Formyl_transf_N_sf"/>
</dbReference>
<dbReference type="InterPro" id="IPR011034">
    <property type="entry name" value="Formyl_transferase-like_C_sf"/>
</dbReference>
<dbReference type="InterPro" id="IPR001555">
    <property type="entry name" value="GART_AS"/>
</dbReference>
<dbReference type="InterPro" id="IPR044135">
    <property type="entry name" value="Met-tRNA-FMT_C"/>
</dbReference>
<dbReference type="InterPro" id="IPR041711">
    <property type="entry name" value="Met-tRNA-FMT_N"/>
</dbReference>
<dbReference type="NCBIfam" id="TIGR00460">
    <property type="entry name" value="fmt"/>
    <property type="match status" value="1"/>
</dbReference>
<dbReference type="PANTHER" id="PTHR11138">
    <property type="entry name" value="METHIONYL-TRNA FORMYLTRANSFERASE"/>
    <property type="match status" value="1"/>
</dbReference>
<dbReference type="PANTHER" id="PTHR11138:SF5">
    <property type="entry name" value="METHIONYL-TRNA FORMYLTRANSFERASE, MITOCHONDRIAL"/>
    <property type="match status" value="1"/>
</dbReference>
<dbReference type="Pfam" id="PF02911">
    <property type="entry name" value="Formyl_trans_C"/>
    <property type="match status" value="1"/>
</dbReference>
<dbReference type="Pfam" id="PF00551">
    <property type="entry name" value="Formyl_trans_N"/>
    <property type="match status" value="1"/>
</dbReference>
<dbReference type="SUPFAM" id="SSF50486">
    <property type="entry name" value="FMT C-terminal domain-like"/>
    <property type="match status" value="1"/>
</dbReference>
<dbReference type="SUPFAM" id="SSF53328">
    <property type="entry name" value="Formyltransferase"/>
    <property type="match status" value="1"/>
</dbReference>
<dbReference type="PROSITE" id="PS00373">
    <property type="entry name" value="GART"/>
    <property type="match status" value="1"/>
</dbReference>
<comment type="function">
    <text evidence="1">Attaches a formyl group to the free amino group of methionyl-tRNA(fMet). The formyl group appears to play a dual role in the initiator identity of N-formylmethionyl-tRNA by promoting its recognition by IF2 and preventing the misappropriation of this tRNA by the elongation apparatus.</text>
</comment>
<comment type="catalytic activity">
    <reaction evidence="1">
        <text>L-methionyl-tRNA(fMet) + (6R)-10-formyltetrahydrofolate = N-formyl-L-methionyl-tRNA(fMet) + (6S)-5,6,7,8-tetrahydrofolate + H(+)</text>
        <dbReference type="Rhea" id="RHEA:24380"/>
        <dbReference type="Rhea" id="RHEA-COMP:9952"/>
        <dbReference type="Rhea" id="RHEA-COMP:9953"/>
        <dbReference type="ChEBI" id="CHEBI:15378"/>
        <dbReference type="ChEBI" id="CHEBI:57453"/>
        <dbReference type="ChEBI" id="CHEBI:78530"/>
        <dbReference type="ChEBI" id="CHEBI:78844"/>
        <dbReference type="ChEBI" id="CHEBI:195366"/>
        <dbReference type="EC" id="2.1.2.9"/>
    </reaction>
</comment>
<comment type="similarity">
    <text evidence="1">Belongs to the Fmt family.</text>
</comment>
<organism>
    <name type="scientific">Clostridium novyi (strain NT)</name>
    <dbReference type="NCBI Taxonomy" id="386415"/>
    <lineage>
        <taxon>Bacteria</taxon>
        <taxon>Bacillati</taxon>
        <taxon>Bacillota</taxon>
        <taxon>Clostridia</taxon>
        <taxon>Eubacteriales</taxon>
        <taxon>Clostridiaceae</taxon>
        <taxon>Clostridium</taxon>
    </lineage>
</organism>
<reference key="1">
    <citation type="journal article" date="2006" name="Nat. Biotechnol.">
        <title>The genome and transcriptomes of the anti-tumor agent Clostridium novyi-NT.</title>
        <authorList>
            <person name="Bettegowda C."/>
            <person name="Huang X."/>
            <person name="Lin J."/>
            <person name="Cheong I."/>
            <person name="Kohli M."/>
            <person name="Szabo S.A."/>
            <person name="Zhang X."/>
            <person name="Diaz L.A. Jr."/>
            <person name="Velculescu V.E."/>
            <person name="Parmigiani G."/>
            <person name="Kinzler K.W."/>
            <person name="Vogelstein B."/>
            <person name="Zhou S."/>
        </authorList>
    </citation>
    <scope>NUCLEOTIDE SEQUENCE [LARGE SCALE GENOMIC DNA]</scope>
    <source>
        <strain>NT</strain>
    </source>
</reference>
<gene>
    <name evidence="1" type="primary">fmt</name>
    <name type="ordered locus">NT01CX_2244</name>
</gene>
<name>FMT_CLONN</name>
<feature type="chain" id="PRO_1000020048" description="Methionyl-tRNA formyltransferase">
    <location>
        <begin position="1"/>
        <end position="309"/>
    </location>
</feature>
<feature type="binding site" evidence="1">
    <location>
        <begin position="109"/>
        <end position="112"/>
    </location>
    <ligand>
        <name>(6S)-5,6,7,8-tetrahydrofolate</name>
        <dbReference type="ChEBI" id="CHEBI:57453"/>
    </ligand>
</feature>
<protein>
    <recommendedName>
        <fullName evidence="1">Methionyl-tRNA formyltransferase</fullName>
        <ecNumber evidence="1">2.1.2.9</ecNumber>
    </recommendedName>
</protein>
<keyword id="KW-0648">Protein biosynthesis</keyword>
<keyword id="KW-1185">Reference proteome</keyword>
<keyword id="KW-0808">Transferase</keyword>
<evidence type="ECO:0000255" key="1">
    <source>
        <dbReference type="HAMAP-Rule" id="MF_00182"/>
    </source>
</evidence>
<proteinExistence type="inferred from homology"/>
<accession>A0Q115</accession>
<sequence length="309" mass="34406">MKIVFMGTPEFAVPSLKAMVENFNVEGVFTQPDRPKGRGKKLAMSPVKEVALENNIDVYQPVSLRKEPEFIEKLKNIQPDFIIVVAYGQILPKEVLEIPKYACINLHASLLPKYRGAAPLNWAIINGEKKSGNTTMLMDVGLDTGDMLMTQEVDINDSMTAGELHDILMIQGGDLLVDTINKMVSGEITPIKQDDSKTCYASMLDKKMACIDWSKSASEIHNLIRGLNPWPVAYTHYDDKVMKIYKSHVLNENSKKEPGTVINVSNKGIKVACGEGILVVEEIQFPGKKPLKVEQYIRGNSIEIESVLK</sequence>